<protein>
    <recommendedName>
        <fullName evidence="1">Redox-sensing transcriptional repressor Rex</fullName>
    </recommendedName>
</protein>
<reference key="1">
    <citation type="submission" date="2007-06" db="EMBL/GenBank/DDBJ databases">
        <title>Complete sequence of Clostridium beijerinckii NCIMB 8052.</title>
        <authorList>
            <consortium name="US DOE Joint Genome Institute"/>
            <person name="Copeland A."/>
            <person name="Lucas S."/>
            <person name="Lapidus A."/>
            <person name="Barry K."/>
            <person name="Detter J.C."/>
            <person name="Glavina del Rio T."/>
            <person name="Hammon N."/>
            <person name="Israni S."/>
            <person name="Dalin E."/>
            <person name="Tice H."/>
            <person name="Pitluck S."/>
            <person name="Sims D."/>
            <person name="Brettin T."/>
            <person name="Bruce D."/>
            <person name="Tapia R."/>
            <person name="Brainard J."/>
            <person name="Schmutz J."/>
            <person name="Larimer F."/>
            <person name="Land M."/>
            <person name="Hauser L."/>
            <person name="Kyrpides N."/>
            <person name="Mikhailova N."/>
            <person name="Bennet G."/>
            <person name="Cann I."/>
            <person name="Chen J.-S."/>
            <person name="Contreras A.L."/>
            <person name="Jones D."/>
            <person name="Kashket E."/>
            <person name="Mitchell W."/>
            <person name="Stoddard S."/>
            <person name="Schwarz W."/>
            <person name="Qureshi N."/>
            <person name="Young M."/>
            <person name="Shi Z."/>
            <person name="Ezeji T."/>
            <person name="White B."/>
            <person name="Blaschek H."/>
            <person name="Richardson P."/>
        </authorList>
    </citation>
    <scope>NUCLEOTIDE SEQUENCE [LARGE SCALE GENOMIC DNA]</scope>
    <source>
        <strain>ATCC 51743 / NCIMB 8052</strain>
    </source>
</reference>
<evidence type="ECO:0000255" key="1">
    <source>
        <dbReference type="HAMAP-Rule" id="MF_01131"/>
    </source>
</evidence>
<comment type="function">
    <text evidence="1">Modulates transcription in response to changes in cellular NADH/NAD(+) redox state.</text>
</comment>
<comment type="subunit">
    <text evidence="1">Homodimer.</text>
</comment>
<comment type="subcellular location">
    <subcellularLocation>
        <location evidence="1">Cytoplasm</location>
    </subcellularLocation>
</comment>
<comment type="similarity">
    <text evidence="1">Belongs to the transcriptional regulatory Rex family.</text>
</comment>
<accession>A6LQ78</accession>
<name>REX_CLOB8</name>
<feature type="chain" id="PRO_1000085023" description="Redox-sensing transcriptional repressor Rex">
    <location>
        <begin position="1"/>
        <end position="211"/>
    </location>
</feature>
<feature type="DNA-binding region" description="H-T-H motif" evidence="1">
    <location>
        <begin position="17"/>
        <end position="56"/>
    </location>
</feature>
<feature type="binding site" evidence="1">
    <location>
        <begin position="91"/>
        <end position="96"/>
    </location>
    <ligand>
        <name>NAD(+)</name>
        <dbReference type="ChEBI" id="CHEBI:57540"/>
    </ligand>
</feature>
<keyword id="KW-0963">Cytoplasm</keyword>
<keyword id="KW-0238">DNA-binding</keyword>
<keyword id="KW-0520">NAD</keyword>
<keyword id="KW-0678">Repressor</keyword>
<keyword id="KW-0804">Transcription</keyword>
<keyword id="KW-0805">Transcription regulation</keyword>
<gene>
    <name evidence="1" type="primary">rex</name>
    <name type="ordered locus">Cbei_0320</name>
</gene>
<dbReference type="EMBL" id="CP000721">
    <property type="protein sequence ID" value="ABR32508.1"/>
    <property type="molecule type" value="Genomic_DNA"/>
</dbReference>
<dbReference type="RefSeq" id="WP_011967670.1">
    <property type="nucleotide sequence ID" value="NC_009617.1"/>
</dbReference>
<dbReference type="SMR" id="A6LQ78"/>
<dbReference type="KEGG" id="cbe:Cbei_0320"/>
<dbReference type="eggNOG" id="COG2344">
    <property type="taxonomic scope" value="Bacteria"/>
</dbReference>
<dbReference type="HOGENOM" id="CLU_061534_1_0_9"/>
<dbReference type="Proteomes" id="UP000000565">
    <property type="component" value="Chromosome"/>
</dbReference>
<dbReference type="GO" id="GO:0005737">
    <property type="term" value="C:cytoplasm"/>
    <property type="evidence" value="ECO:0007669"/>
    <property type="project" value="UniProtKB-SubCell"/>
</dbReference>
<dbReference type="GO" id="GO:0003677">
    <property type="term" value="F:DNA binding"/>
    <property type="evidence" value="ECO:0007669"/>
    <property type="project" value="UniProtKB-UniRule"/>
</dbReference>
<dbReference type="GO" id="GO:0003700">
    <property type="term" value="F:DNA-binding transcription factor activity"/>
    <property type="evidence" value="ECO:0007669"/>
    <property type="project" value="UniProtKB-UniRule"/>
</dbReference>
<dbReference type="GO" id="GO:0045892">
    <property type="term" value="P:negative regulation of DNA-templated transcription"/>
    <property type="evidence" value="ECO:0007669"/>
    <property type="project" value="InterPro"/>
</dbReference>
<dbReference type="GO" id="GO:0051775">
    <property type="term" value="P:response to redox state"/>
    <property type="evidence" value="ECO:0007669"/>
    <property type="project" value="InterPro"/>
</dbReference>
<dbReference type="Gene3D" id="3.40.50.720">
    <property type="entry name" value="NAD(P)-binding Rossmann-like Domain"/>
    <property type="match status" value="1"/>
</dbReference>
<dbReference type="Gene3D" id="1.10.10.10">
    <property type="entry name" value="Winged helix-like DNA-binding domain superfamily/Winged helix DNA-binding domain"/>
    <property type="match status" value="1"/>
</dbReference>
<dbReference type="HAMAP" id="MF_01131">
    <property type="entry name" value="Rex"/>
    <property type="match status" value="1"/>
</dbReference>
<dbReference type="InterPro" id="IPR003781">
    <property type="entry name" value="CoA-bd"/>
</dbReference>
<dbReference type="InterPro" id="IPR036291">
    <property type="entry name" value="NAD(P)-bd_dom_sf"/>
</dbReference>
<dbReference type="InterPro" id="IPR009718">
    <property type="entry name" value="Rex_DNA-bd_C_dom"/>
</dbReference>
<dbReference type="InterPro" id="IPR022876">
    <property type="entry name" value="Tscrpt_rep_Rex"/>
</dbReference>
<dbReference type="InterPro" id="IPR036388">
    <property type="entry name" value="WH-like_DNA-bd_sf"/>
</dbReference>
<dbReference type="InterPro" id="IPR036390">
    <property type="entry name" value="WH_DNA-bd_sf"/>
</dbReference>
<dbReference type="NCBIfam" id="NF003989">
    <property type="entry name" value="PRK05472.1-3"/>
    <property type="match status" value="1"/>
</dbReference>
<dbReference type="NCBIfam" id="NF003990">
    <property type="entry name" value="PRK05472.1-4"/>
    <property type="match status" value="1"/>
</dbReference>
<dbReference type="NCBIfam" id="NF003993">
    <property type="entry name" value="PRK05472.2-2"/>
    <property type="match status" value="1"/>
</dbReference>
<dbReference type="NCBIfam" id="NF003994">
    <property type="entry name" value="PRK05472.2-3"/>
    <property type="match status" value="1"/>
</dbReference>
<dbReference type="NCBIfam" id="NF003995">
    <property type="entry name" value="PRK05472.2-4"/>
    <property type="match status" value="1"/>
</dbReference>
<dbReference type="NCBIfam" id="NF003996">
    <property type="entry name" value="PRK05472.2-5"/>
    <property type="match status" value="1"/>
</dbReference>
<dbReference type="PANTHER" id="PTHR35786">
    <property type="entry name" value="REDOX-SENSING TRANSCRIPTIONAL REPRESSOR REX"/>
    <property type="match status" value="1"/>
</dbReference>
<dbReference type="PANTHER" id="PTHR35786:SF1">
    <property type="entry name" value="REDOX-SENSING TRANSCRIPTIONAL REPRESSOR REX 1"/>
    <property type="match status" value="1"/>
</dbReference>
<dbReference type="Pfam" id="PF02629">
    <property type="entry name" value="CoA_binding"/>
    <property type="match status" value="1"/>
</dbReference>
<dbReference type="Pfam" id="PF06971">
    <property type="entry name" value="Put_DNA-bind_N"/>
    <property type="match status" value="1"/>
</dbReference>
<dbReference type="SMART" id="SM00881">
    <property type="entry name" value="CoA_binding"/>
    <property type="match status" value="1"/>
</dbReference>
<dbReference type="SUPFAM" id="SSF51735">
    <property type="entry name" value="NAD(P)-binding Rossmann-fold domains"/>
    <property type="match status" value="1"/>
</dbReference>
<dbReference type="SUPFAM" id="SSF46785">
    <property type="entry name" value="Winged helix' DNA-binding domain"/>
    <property type="match status" value="1"/>
</dbReference>
<proteinExistence type="inferred from homology"/>
<sequence>MEKHKNISMAVIKRLPKYHRYLEELMKNEVDRISSKELGEKIGFTASQIRQDLNCFGDFGQQGYGYNVKELYTQISAILGLDRGYEAALVGAGNIGQAVSNYSRFENLGFKITAIFDANPKLIGMKIRDVEIMDIDEMESVLEEHKIDIGIICVPRKNAQVVADELIRGGVRAIWNFAPVDLVVPDHVKVENVHLSESLLTLIYLLNESES</sequence>
<organism>
    <name type="scientific">Clostridium beijerinckii (strain ATCC 51743 / NCIMB 8052)</name>
    <name type="common">Clostridium acetobutylicum</name>
    <dbReference type="NCBI Taxonomy" id="290402"/>
    <lineage>
        <taxon>Bacteria</taxon>
        <taxon>Bacillati</taxon>
        <taxon>Bacillota</taxon>
        <taxon>Clostridia</taxon>
        <taxon>Eubacteriales</taxon>
        <taxon>Clostridiaceae</taxon>
        <taxon>Clostridium</taxon>
    </lineage>
</organism>